<proteinExistence type="inferred from homology"/>
<comment type="function">
    <text evidence="1">Modulates RecA activity.</text>
</comment>
<comment type="subcellular location">
    <subcellularLocation>
        <location evidence="1">Cytoplasm</location>
    </subcellularLocation>
</comment>
<comment type="similarity">
    <text evidence="1">Belongs to the RecX family.</text>
</comment>
<gene>
    <name evidence="1" type="primary">recX</name>
    <name type="ordered locus">MMAR_1978</name>
</gene>
<feature type="chain" id="PRO_1000137178" description="Regulatory protein RecX">
    <location>
        <begin position="1"/>
        <end position="173"/>
    </location>
</feature>
<evidence type="ECO:0000255" key="1">
    <source>
        <dbReference type="HAMAP-Rule" id="MF_01114"/>
    </source>
</evidence>
<protein>
    <recommendedName>
        <fullName evidence="1">Regulatory protein RecX</fullName>
    </recommendedName>
</protein>
<keyword id="KW-0963">Cytoplasm</keyword>
<keyword id="KW-1185">Reference proteome</keyword>
<sequence length="173" mass="19012">MTVSFPPPSTSEPSREEQARALCLRLLTARSRTRAELAGQLAKRGYPEDVGDRVLDRLTAVGLVDDADFAADWVQSRRANAGKSRRALAAELQAKGVDQDVIGTALAGLDAGAERGRAEQLVRTKLRREKLTEDDARVTRRLVAMLARRGYSQTVACEVVIAELAAERDRRRV</sequence>
<accession>B2HL07</accession>
<dbReference type="EMBL" id="CP000854">
    <property type="protein sequence ID" value="ACC40428.1"/>
    <property type="molecule type" value="Genomic_DNA"/>
</dbReference>
<dbReference type="RefSeq" id="WP_011741165.1">
    <property type="nucleotide sequence ID" value="NC_010612.1"/>
</dbReference>
<dbReference type="SMR" id="B2HL07"/>
<dbReference type="STRING" id="216594.MMAR_1978"/>
<dbReference type="GeneID" id="93437786"/>
<dbReference type="KEGG" id="mmi:MMAR_1978"/>
<dbReference type="eggNOG" id="COG2137">
    <property type="taxonomic scope" value="Bacteria"/>
</dbReference>
<dbReference type="HOGENOM" id="CLU_066607_0_2_11"/>
<dbReference type="OrthoDB" id="5244465at2"/>
<dbReference type="Proteomes" id="UP000001190">
    <property type="component" value="Chromosome"/>
</dbReference>
<dbReference type="GO" id="GO:0005737">
    <property type="term" value="C:cytoplasm"/>
    <property type="evidence" value="ECO:0007669"/>
    <property type="project" value="UniProtKB-SubCell"/>
</dbReference>
<dbReference type="GO" id="GO:0006282">
    <property type="term" value="P:regulation of DNA repair"/>
    <property type="evidence" value="ECO:0007669"/>
    <property type="project" value="UniProtKB-UniRule"/>
</dbReference>
<dbReference type="Gene3D" id="1.10.10.10">
    <property type="entry name" value="Winged helix-like DNA-binding domain superfamily/Winged helix DNA-binding domain"/>
    <property type="match status" value="2"/>
</dbReference>
<dbReference type="HAMAP" id="MF_01114">
    <property type="entry name" value="RecX"/>
    <property type="match status" value="1"/>
</dbReference>
<dbReference type="InterPro" id="IPR053926">
    <property type="entry name" value="RecX_HTH_1st"/>
</dbReference>
<dbReference type="InterPro" id="IPR053924">
    <property type="entry name" value="RecX_HTH_2nd"/>
</dbReference>
<dbReference type="InterPro" id="IPR003783">
    <property type="entry name" value="Regulatory_RecX"/>
</dbReference>
<dbReference type="InterPro" id="IPR036388">
    <property type="entry name" value="WH-like_DNA-bd_sf"/>
</dbReference>
<dbReference type="NCBIfam" id="NF001056">
    <property type="entry name" value="PRK00117.3-1"/>
    <property type="match status" value="1"/>
</dbReference>
<dbReference type="PANTHER" id="PTHR33602">
    <property type="entry name" value="REGULATORY PROTEIN RECX FAMILY PROTEIN"/>
    <property type="match status" value="1"/>
</dbReference>
<dbReference type="PANTHER" id="PTHR33602:SF1">
    <property type="entry name" value="REGULATORY PROTEIN RECX FAMILY PROTEIN"/>
    <property type="match status" value="1"/>
</dbReference>
<dbReference type="Pfam" id="PF21982">
    <property type="entry name" value="RecX_HTH1"/>
    <property type="match status" value="1"/>
</dbReference>
<dbReference type="Pfam" id="PF02631">
    <property type="entry name" value="RecX_HTH2"/>
    <property type="match status" value="1"/>
</dbReference>
<name>RECX_MYCMM</name>
<organism>
    <name type="scientific">Mycobacterium marinum (strain ATCC BAA-535 / M)</name>
    <dbReference type="NCBI Taxonomy" id="216594"/>
    <lineage>
        <taxon>Bacteria</taxon>
        <taxon>Bacillati</taxon>
        <taxon>Actinomycetota</taxon>
        <taxon>Actinomycetes</taxon>
        <taxon>Mycobacteriales</taxon>
        <taxon>Mycobacteriaceae</taxon>
        <taxon>Mycobacterium</taxon>
        <taxon>Mycobacterium ulcerans group</taxon>
    </lineage>
</organism>
<reference key="1">
    <citation type="journal article" date="2008" name="Genome Res.">
        <title>Insights from the complete genome sequence of Mycobacterium marinum on the evolution of Mycobacterium tuberculosis.</title>
        <authorList>
            <person name="Stinear T.P."/>
            <person name="Seemann T."/>
            <person name="Harrison P.F."/>
            <person name="Jenkin G.A."/>
            <person name="Davies J.K."/>
            <person name="Johnson P.D."/>
            <person name="Abdellah Z."/>
            <person name="Arrowsmith C."/>
            <person name="Chillingworth T."/>
            <person name="Churcher C."/>
            <person name="Clarke K."/>
            <person name="Cronin A."/>
            <person name="Davis P."/>
            <person name="Goodhead I."/>
            <person name="Holroyd N."/>
            <person name="Jagels K."/>
            <person name="Lord A."/>
            <person name="Moule S."/>
            <person name="Mungall K."/>
            <person name="Norbertczak H."/>
            <person name="Quail M.A."/>
            <person name="Rabbinowitsch E."/>
            <person name="Walker D."/>
            <person name="White B."/>
            <person name="Whitehead S."/>
            <person name="Small P.L."/>
            <person name="Brosch R."/>
            <person name="Ramakrishnan L."/>
            <person name="Fischbach M.A."/>
            <person name="Parkhill J."/>
            <person name="Cole S.T."/>
        </authorList>
    </citation>
    <scope>NUCLEOTIDE SEQUENCE [LARGE SCALE GENOMIC DNA]</scope>
    <source>
        <strain>ATCC BAA-535 / M</strain>
    </source>
</reference>